<accession>Q4FQD5</accession>
<reference key="1">
    <citation type="journal article" date="2010" name="Appl. Environ. Microbiol.">
        <title>The genome sequence of Psychrobacter arcticus 273-4, a psychroactive Siberian permafrost bacterium, reveals mechanisms for adaptation to low-temperature growth.</title>
        <authorList>
            <person name="Ayala-del-Rio H.L."/>
            <person name="Chain P.S."/>
            <person name="Grzymski J.J."/>
            <person name="Ponder M.A."/>
            <person name="Ivanova N."/>
            <person name="Bergholz P.W."/>
            <person name="Di Bartolo G."/>
            <person name="Hauser L."/>
            <person name="Land M."/>
            <person name="Bakermans C."/>
            <person name="Rodrigues D."/>
            <person name="Klappenbach J."/>
            <person name="Zarka D."/>
            <person name="Larimer F."/>
            <person name="Richardson P."/>
            <person name="Murray A."/>
            <person name="Thomashow M."/>
            <person name="Tiedje J.M."/>
        </authorList>
    </citation>
    <scope>NUCLEOTIDE SEQUENCE [LARGE SCALE GENOMIC DNA]</scope>
    <source>
        <strain>DSM 17307 / VKM B-2377 / 273-4</strain>
    </source>
</reference>
<keyword id="KW-1003">Cell membrane</keyword>
<keyword id="KW-0210">Decarboxylase</keyword>
<keyword id="KW-0444">Lipid biosynthesis</keyword>
<keyword id="KW-0443">Lipid metabolism</keyword>
<keyword id="KW-0456">Lyase</keyword>
<keyword id="KW-0472">Membrane</keyword>
<keyword id="KW-0594">Phospholipid biosynthesis</keyword>
<keyword id="KW-1208">Phospholipid metabolism</keyword>
<keyword id="KW-0670">Pyruvate</keyword>
<keyword id="KW-1185">Reference proteome</keyword>
<keyword id="KW-0865">Zymogen</keyword>
<gene>
    <name evidence="1" type="primary">psd</name>
    <name type="ordered locus">Psyc_1925</name>
</gene>
<proteinExistence type="inferred from homology"/>
<organism>
    <name type="scientific">Psychrobacter arcticus (strain DSM 17307 / VKM B-2377 / 273-4)</name>
    <dbReference type="NCBI Taxonomy" id="259536"/>
    <lineage>
        <taxon>Bacteria</taxon>
        <taxon>Pseudomonadati</taxon>
        <taxon>Pseudomonadota</taxon>
        <taxon>Gammaproteobacteria</taxon>
        <taxon>Moraxellales</taxon>
        <taxon>Moraxellaceae</taxon>
        <taxon>Psychrobacter</taxon>
    </lineage>
</organism>
<protein>
    <recommendedName>
        <fullName evidence="1">Phosphatidylserine decarboxylase proenzyme</fullName>
        <ecNumber evidence="1">4.1.1.65</ecNumber>
    </recommendedName>
    <component>
        <recommendedName>
            <fullName evidence="1">Phosphatidylserine decarboxylase alpha chain</fullName>
        </recommendedName>
    </component>
    <component>
        <recommendedName>
            <fullName evidence="1">Phosphatidylserine decarboxylase beta chain</fullName>
        </recommendedName>
    </component>
</protein>
<dbReference type="EC" id="4.1.1.65" evidence="1"/>
<dbReference type="EMBL" id="CP000082">
    <property type="protein sequence ID" value="AAZ19773.1"/>
    <property type="molecule type" value="Genomic_DNA"/>
</dbReference>
<dbReference type="RefSeq" id="WP_011281182.1">
    <property type="nucleotide sequence ID" value="NC_007204.1"/>
</dbReference>
<dbReference type="SMR" id="Q4FQD5"/>
<dbReference type="STRING" id="259536.Psyc_1925"/>
<dbReference type="KEGG" id="par:Psyc_1925"/>
<dbReference type="eggNOG" id="COG0688">
    <property type="taxonomic scope" value="Bacteria"/>
</dbReference>
<dbReference type="HOGENOM" id="CLU_029061_4_1_6"/>
<dbReference type="OrthoDB" id="9802030at2"/>
<dbReference type="UniPathway" id="UPA00558">
    <property type="reaction ID" value="UER00616"/>
</dbReference>
<dbReference type="Proteomes" id="UP000000546">
    <property type="component" value="Chromosome"/>
</dbReference>
<dbReference type="GO" id="GO:0005886">
    <property type="term" value="C:plasma membrane"/>
    <property type="evidence" value="ECO:0007669"/>
    <property type="project" value="UniProtKB-SubCell"/>
</dbReference>
<dbReference type="GO" id="GO:0004609">
    <property type="term" value="F:phosphatidylserine decarboxylase activity"/>
    <property type="evidence" value="ECO:0007669"/>
    <property type="project" value="UniProtKB-UniRule"/>
</dbReference>
<dbReference type="GO" id="GO:0006646">
    <property type="term" value="P:phosphatidylethanolamine biosynthetic process"/>
    <property type="evidence" value="ECO:0007669"/>
    <property type="project" value="UniProtKB-UniRule"/>
</dbReference>
<dbReference type="HAMAP" id="MF_00662">
    <property type="entry name" value="PS_decarb_PSD_B_type1"/>
    <property type="match status" value="1"/>
</dbReference>
<dbReference type="InterPro" id="IPR003817">
    <property type="entry name" value="PS_Dcarbxylase"/>
</dbReference>
<dbReference type="InterPro" id="IPR033177">
    <property type="entry name" value="PSD-B"/>
</dbReference>
<dbReference type="InterPro" id="IPR033178">
    <property type="entry name" value="PSD_type1_pro"/>
</dbReference>
<dbReference type="NCBIfam" id="TIGR00163">
    <property type="entry name" value="PS_decarb"/>
    <property type="match status" value="1"/>
</dbReference>
<dbReference type="PANTHER" id="PTHR10067">
    <property type="entry name" value="PHOSPHATIDYLSERINE DECARBOXYLASE"/>
    <property type="match status" value="1"/>
</dbReference>
<dbReference type="PANTHER" id="PTHR10067:SF6">
    <property type="entry name" value="PHOSPHATIDYLSERINE DECARBOXYLASE PROENZYME, MITOCHONDRIAL"/>
    <property type="match status" value="1"/>
</dbReference>
<dbReference type="Pfam" id="PF02666">
    <property type="entry name" value="PS_Dcarbxylase"/>
    <property type="match status" value="1"/>
</dbReference>
<sequence length="277" mass="30614">MNVFTTLQQFVPQQKISKVAGRLAASRHPWVKRTFIRSFAKAYDVSLDEYERQSLNAYESFNDFFTRELQDNARIIDASINGIVSPADGMISQLGQIHDHKLLQAKGRDYDIGQLLADSADGDYFADGSFATVYLAPSNYHRVHMPFDGTLIKTRYVPGTLFSVNNTTAANVPDLFARNERLVCLFDTAYGKAAVVMVGAMIVAGIETVATGKISRTDDIQEADHDMSFKKGDELGRFYLGSTAIVVLPKAAKTEWQATMQHGSTVQMGQLLANAKI</sequence>
<name>PSD_PSYA2</name>
<comment type="function">
    <text evidence="1">Catalyzes the formation of phosphatidylethanolamine (PtdEtn) from phosphatidylserine (PtdSer).</text>
</comment>
<comment type="catalytic activity">
    <reaction evidence="1">
        <text>a 1,2-diacyl-sn-glycero-3-phospho-L-serine + H(+) = a 1,2-diacyl-sn-glycero-3-phosphoethanolamine + CO2</text>
        <dbReference type="Rhea" id="RHEA:20828"/>
        <dbReference type="ChEBI" id="CHEBI:15378"/>
        <dbReference type="ChEBI" id="CHEBI:16526"/>
        <dbReference type="ChEBI" id="CHEBI:57262"/>
        <dbReference type="ChEBI" id="CHEBI:64612"/>
        <dbReference type="EC" id="4.1.1.65"/>
    </reaction>
</comment>
<comment type="cofactor">
    <cofactor evidence="1">
        <name>pyruvate</name>
        <dbReference type="ChEBI" id="CHEBI:15361"/>
    </cofactor>
    <text evidence="1">Binds 1 pyruvoyl group covalently per subunit.</text>
</comment>
<comment type="pathway">
    <text evidence="1">Phospholipid metabolism; phosphatidylethanolamine biosynthesis; phosphatidylethanolamine from CDP-diacylglycerol: step 2/2.</text>
</comment>
<comment type="subunit">
    <text evidence="1">Heterodimer of a large membrane-associated beta subunit and a small pyruvoyl-containing alpha subunit.</text>
</comment>
<comment type="subcellular location">
    <subcellularLocation>
        <location evidence="1">Cell membrane</location>
        <topology evidence="1">Peripheral membrane protein</topology>
    </subcellularLocation>
</comment>
<comment type="PTM">
    <text evidence="1">Is synthesized initially as an inactive proenzyme. Formation of the active enzyme involves a self-maturation process in which the active site pyruvoyl group is generated from an internal serine residue via an autocatalytic post-translational modification. Two non-identical subunits are generated from the proenzyme in this reaction, and the pyruvate is formed at the N-terminus of the alpha chain, which is derived from the carboxyl end of the proenzyme. The autoendoproteolytic cleavage occurs by a canonical serine protease mechanism, in which the side chain hydroxyl group of the serine supplies its oxygen atom to form the C-terminus of the beta chain, while the remainder of the serine residue undergoes an oxidative deamination to produce ammonia and the pyruvoyl prosthetic group on the alpha chain. During this reaction, the Ser that is part of the protease active site of the proenzyme becomes the pyruvoyl prosthetic group, which constitutes an essential element of the active site of the mature decarboxylase.</text>
</comment>
<comment type="similarity">
    <text evidence="1">Belongs to the phosphatidylserine decarboxylase family. PSD-B subfamily. Prokaryotic type I sub-subfamily.</text>
</comment>
<evidence type="ECO:0000255" key="1">
    <source>
        <dbReference type="HAMAP-Rule" id="MF_00662"/>
    </source>
</evidence>
<feature type="chain" id="PRO_0000262141" description="Phosphatidylserine decarboxylase beta chain" evidence="1">
    <location>
        <begin position="1"/>
        <end position="241"/>
    </location>
</feature>
<feature type="chain" id="PRO_0000262142" description="Phosphatidylserine decarboxylase alpha chain" evidence="1">
    <location>
        <begin position="242"/>
        <end position="277"/>
    </location>
</feature>
<feature type="active site" description="Charge relay system; for autoendoproteolytic cleavage activity" evidence="1">
    <location>
        <position position="88"/>
    </location>
</feature>
<feature type="active site" description="Charge relay system; for autoendoproteolytic cleavage activity" evidence="1">
    <location>
        <position position="144"/>
    </location>
</feature>
<feature type="active site" description="Charge relay system; for autoendoproteolytic cleavage activity" evidence="1">
    <location>
        <position position="242"/>
    </location>
</feature>
<feature type="active site" description="Schiff-base intermediate with substrate; via pyruvic acid; for decarboxylase activity" evidence="1">
    <location>
        <position position="242"/>
    </location>
</feature>
<feature type="site" description="Cleavage (non-hydrolytic); by autocatalysis" evidence="1">
    <location>
        <begin position="241"/>
        <end position="242"/>
    </location>
</feature>
<feature type="modified residue" description="Pyruvic acid (Ser); by autocatalysis" evidence="1">
    <location>
        <position position="242"/>
    </location>
</feature>